<sequence>MTQTQPVGTLRLTIDDQGPQGQSRAVEQFHQGALRVIRPHYLDDSGQVSYTIIAIGGGYLGGDVYEQQFTVKDNAKALITTQSATKIYRTPQGPVTQYTEINVGENAVLEYLADQTIAYRESTYHQFTKVTLHPTSTFVMSEQITPGWHPDGKHFAYDEMRLHTEITDSTTGRLVLLDNLLLRPDSREGSFGWTEQYTHSGQMIVMGEGVDKQLVAELNEQLAAHPDVYGAVNFLSAPGTLLRGFIARTLSNRTEELINLHEHIASLLRGRWRGQEPVNLRKY</sequence>
<accession>A4QA27</accession>
<gene>
    <name evidence="1" type="primary">ureD</name>
    <name type="ordered locus">cgR_0109</name>
</gene>
<keyword id="KW-0143">Chaperone</keyword>
<keyword id="KW-0963">Cytoplasm</keyword>
<keyword id="KW-0996">Nickel insertion</keyword>
<organism>
    <name type="scientific">Corynebacterium glutamicum (strain R)</name>
    <dbReference type="NCBI Taxonomy" id="340322"/>
    <lineage>
        <taxon>Bacteria</taxon>
        <taxon>Bacillati</taxon>
        <taxon>Actinomycetota</taxon>
        <taxon>Actinomycetes</taxon>
        <taxon>Mycobacteriales</taxon>
        <taxon>Corynebacteriaceae</taxon>
        <taxon>Corynebacterium</taxon>
    </lineage>
</organism>
<reference key="1">
    <citation type="journal article" date="2007" name="Microbiology">
        <title>Comparative analysis of the Corynebacterium glutamicum group and complete genome sequence of strain R.</title>
        <authorList>
            <person name="Yukawa H."/>
            <person name="Omumasaba C.A."/>
            <person name="Nonaka H."/>
            <person name="Kos P."/>
            <person name="Okai N."/>
            <person name="Suzuki N."/>
            <person name="Suda M."/>
            <person name="Tsuge Y."/>
            <person name="Watanabe J."/>
            <person name="Ikeda Y."/>
            <person name="Vertes A.A."/>
            <person name="Inui M."/>
        </authorList>
    </citation>
    <scope>NUCLEOTIDE SEQUENCE [LARGE SCALE GENOMIC DNA]</scope>
    <source>
        <strain>R</strain>
    </source>
</reference>
<proteinExistence type="inferred from homology"/>
<evidence type="ECO:0000255" key="1">
    <source>
        <dbReference type="HAMAP-Rule" id="MF_01384"/>
    </source>
</evidence>
<evidence type="ECO:0000256" key="2">
    <source>
        <dbReference type="SAM" id="MobiDB-lite"/>
    </source>
</evidence>
<dbReference type="EMBL" id="AP009044">
    <property type="protein sequence ID" value="BAF53070.1"/>
    <property type="molecule type" value="Genomic_DNA"/>
</dbReference>
<dbReference type="RefSeq" id="WP_011896414.1">
    <property type="nucleotide sequence ID" value="NC_009342.1"/>
</dbReference>
<dbReference type="SMR" id="A4QA27"/>
<dbReference type="KEGG" id="cgt:cgR_0109"/>
<dbReference type="HOGENOM" id="CLU_056339_5_0_11"/>
<dbReference type="PhylomeDB" id="A4QA27"/>
<dbReference type="Proteomes" id="UP000006698">
    <property type="component" value="Chromosome"/>
</dbReference>
<dbReference type="GO" id="GO:0005737">
    <property type="term" value="C:cytoplasm"/>
    <property type="evidence" value="ECO:0007669"/>
    <property type="project" value="UniProtKB-SubCell"/>
</dbReference>
<dbReference type="GO" id="GO:0016151">
    <property type="term" value="F:nickel cation binding"/>
    <property type="evidence" value="ECO:0007669"/>
    <property type="project" value="UniProtKB-UniRule"/>
</dbReference>
<dbReference type="HAMAP" id="MF_01384">
    <property type="entry name" value="UreD"/>
    <property type="match status" value="1"/>
</dbReference>
<dbReference type="InterPro" id="IPR002669">
    <property type="entry name" value="UreD"/>
</dbReference>
<dbReference type="PANTHER" id="PTHR33643">
    <property type="entry name" value="UREASE ACCESSORY PROTEIN D"/>
    <property type="match status" value="1"/>
</dbReference>
<dbReference type="PANTHER" id="PTHR33643:SF1">
    <property type="entry name" value="UREASE ACCESSORY PROTEIN D"/>
    <property type="match status" value="1"/>
</dbReference>
<dbReference type="Pfam" id="PF01774">
    <property type="entry name" value="UreD"/>
    <property type="match status" value="1"/>
</dbReference>
<protein>
    <recommendedName>
        <fullName evidence="1">Urease accessory protein UreD</fullName>
    </recommendedName>
</protein>
<name>URED_CORGB</name>
<feature type="chain" id="PRO_1000145088" description="Urease accessory protein UreD">
    <location>
        <begin position="1"/>
        <end position="283"/>
    </location>
</feature>
<feature type="region of interest" description="Disordered" evidence="2">
    <location>
        <begin position="1"/>
        <end position="20"/>
    </location>
</feature>
<comment type="function">
    <text evidence="1">Required for maturation of urease via the functional incorporation of the urease nickel metallocenter.</text>
</comment>
<comment type="subunit">
    <text evidence="1">UreD, UreF and UreG form a complex that acts as a GTP-hydrolysis-dependent molecular chaperone, activating the urease apoprotein by helping to assemble the nickel containing metallocenter of UreC. The UreE protein probably delivers the nickel.</text>
</comment>
<comment type="subcellular location">
    <subcellularLocation>
        <location evidence="1">Cytoplasm</location>
    </subcellularLocation>
</comment>
<comment type="similarity">
    <text evidence="1">Belongs to the UreD family.</text>
</comment>